<accession>Q9Z7P5</accession>
<accession>Q9JQG1</accession>
<organism>
    <name type="scientific">Chlamydia pneumoniae</name>
    <name type="common">Chlamydophila pneumoniae</name>
    <dbReference type="NCBI Taxonomy" id="83558"/>
    <lineage>
        <taxon>Bacteria</taxon>
        <taxon>Pseudomonadati</taxon>
        <taxon>Chlamydiota</taxon>
        <taxon>Chlamydiia</taxon>
        <taxon>Chlamydiales</taxon>
        <taxon>Chlamydiaceae</taxon>
        <taxon>Chlamydia/Chlamydophila group</taxon>
        <taxon>Chlamydia</taxon>
    </lineage>
</organism>
<reference key="1">
    <citation type="journal article" date="1999" name="Nat. Genet.">
        <title>Comparative genomes of Chlamydia pneumoniae and C. trachomatis.</title>
        <authorList>
            <person name="Kalman S."/>
            <person name="Mitchell W.P."/>
            <person name="Marathe R."/>
            <person name="Lammel C.J."/>
            <person name="Fan J."/>
            <person name="Hyman R.W."/>
            <person name="Olinger L."/>
            <person name="Grimwood J."/>
            <person name="Davis R.W."/>
            <person name="Stephens R.S."/>
        </authorList>
    </citation>
    <scope>NUCLEOTIDE SEQUENCE [LARGE SCALE GENOMIC DNA]</scope>
    <source>
        <strain>CWL029</strain>
    </source>
</reference>
<reference key="2">
    <citation type="journal article" date="2000" name="Nucleic Acids Res.">
        <title>Genome sequences of Chlamydia trachomatis MoPn and Chlamydia pneumoniae AR39.</title>
        <authorList>
            <person name="Read T.D."/>
            <person name="Brunham R.C."/>
            <person name="Shen C."/>
            <person name="Gill S.R."/>
            <person name="Heidelberg J.F."/>
            <person name="White O."/>
            <person name="Hickey E.K."/>
            <person name="Peterson J.D."/>
            <person name="Utterback T.R."/>
            <person name="Berry K.J."/>
            <person name="Bass S."/>
            <person name="Linher K.D."/>
            <person name="Weidman J.F."/>
            <person name="Khouri H.M."/>
            <person name="Craven B."/>
            <person name="Bowman C."/>
            <person name="Dodson R.J."/>
            <person name="Gwinn M.L."/>
            <person name="Nelson W.C."/>
            <person name="DeBoy R.T."/>
            <person name="Kolonay J.F."/>
            <person name="McClarty G."/>
            <person name="Salzberg S.L."/>
            <person name="Eisen J.A."/>
            <person name="Fraser C.M."/>
        </authorList>
    </citation>
    <scope>NUCLEOTIDE SEQUENCE [LARGE SCALE GENOMIC DNA]</scope>
    <source>
        <strain>AR39</strain>
    </source>
</reference>
<reference key="3">
    <citation type="journal article" date="2000" name="Nucleic Acids Res.">
        <title>Comparison of whole genome sequences of Chlamydia pneumoniae J138 from Japan and CWL029 from USA.</title>
        <authorList>
            <person name="Shirai M."/>
            <person name="Hirakawa H."/>
            <person name="Kimoto M."/>
            <person name="Tabuchi M."/>
            <person name="Kishi F."/>
            <person name="Ouchi K."/>
            <person name="Shiba T."/>
            <person name="Ishii K."/>
            <person name="Hattori M."/>
            <person name="Kuhara S."/>
            <person name="Nakazawa T."/>
        </authorList>
    </citation>
    <scope>NUCLEOTIDE SEQUENCE [LARGE SCALE GENOMIC DNA]</scope>
    <source>
        <strain>J138</strain>
    </source>
</reference>
<reference key="4">
    <citation type="submission" date="2002-05" db="EMBL/GenBank/DDBJ databases">
        <title>The genome sequence of Chlamydia pneumoniae TW183 and comparison with other Chlamydia strains based on whole genome sequence analysis.</title>
        <authorList>
            <person name="Geng M.M."/>
            <person name="Schuhmacher A."/>
            <person name="Muehldorfer I."/>
            <person name="Bensch K.W."/>
            <person name="Schaefer K.P."/>
            <person name="Schneider S."/>
            <person name="Pohl T."/>
            <person name="Essig A."/>
            <person name="Marre R."/>
            <person name="Melchers K."/>
        </authorList>
    </citation>
    <scope>NUCLEOTIDE SEQUENCE [LARGE SCALE GENOMIC DNA]</scope>
    <source>
        <strain>TW-183</strain>
    </source>
</reference>
<keyword id="KW-1015">Disulfide bond</keyword>
<keyword id="KW-0249">Electron transport</keyword>
<keyword id="KW-0676">Redox-active center</keyword>
<keyword id="KW-0813">Transport</keyword>
<protein>
    <recommendedName>
        <fullName>Thioredoxin</fullName>
        <shortName>Trx</shortName>
    </recommendedName>
</protein>
<gene>
    <name type="primary">trxA</name>
    <name type="ordered locus">CPn_0659</name>
    <name type="ordered locus">CP_0088</name>
    <name type="ordered locus">CpB0685</name>
</gene>
<name>THIO_CHLPN</name>
<proteinExistence type="inferred from homology"/>
<sequence length="102" mass="11292">MVKIISSENFDSFIASGLVLVDFFAEWCGPCRMLTPILENLAAELPHVTIGKINIDENSKPAETYEVSSIPTLILFKDGNEVARVVGLKDKEFLTNLINKHA</sequence>
<comment type="function">
    <text>Participates in various redox reactions through the reversible oxidation of its active center dithiol to a disulfide and catalyzes dithiol-disulfide exchange reactions.</text>
</comment>
<comment type="similarity">
    <text evidence="2">Belongs to the thioredoxin family.</text>
</comment>
<dbReference type="EMBL" id="AE001363">
    <property type="protein sequence ID" value="AAD18798.1"/>
    <property type="molecule type" value="Genomic_DNA"/>
</dbReference>
<dbReference type="EMBL" id="AE002161">
    <property type="protein sequence ID" value="AAF37973.1"/>
    <property type="molecule type" value="Genomic_DNA"/>
</dbReference>
<dbReference type="EMBL" id="BA000008">
    <property type="protein sequence ID" value="BAA98866.1"/>
    <property type="molecule type" value="Genomic_DNA"/>
</dbReference>
<dbReference type="EMBL" id="AE009440">
    <property type="protein sequence ID" value="AAP98614.1"/>
    <property type="molecule type" value="Genomic_DNA"/>
</dbReference>
<dbReference type="PIR" id="D72052">
    <property type="entry name" value="D72052"/>
</dbReference>
<dbReference type="PIR" id="H86572">
    <property type="entry name" value="H86572"/>
</dbReference>
<dbReference type="RefSeq" id="NP_224855.1">
    <property type="nucleotide sequence ID" value="NC_000922.1"/>
</dbReference>
<dbReference type="RefSeq" id="WP_010883297.1">
    <property type="nucleotide sequence ID" value="NZ_LN847257.1"/>
</dbReference>
<dbReference type="SMR" id="Q9Z7P5"/>
<dbReference type="STRING" id="406984.CPK_ORF00059"/>
<dbReference type="GeneID" id="45050710"/>
<dbReference type="KEGG" id="cpa:CP_0088"/>
<dbReference type="KEGG" id="cpj:trxA"/>
<dbReference type="KEGG" id="cpn:CPn_0659"/>
<dbReference type="KEGG" id="cpt:CpB0685"/>
<dbReference type="PATRIC" id="fig|115713.3.peg.729"/>
<dbReference type="eggNOG" id="COG0526">
    <property type="taxonomic scope" value="Bacteria"/>
</dbReference>
<dbReference type="HOGENOM" id="CLU_090389_10_4_0"/>
<dbReference type="OrthoDB" id="9790390at2"/>
<dbReference type="Proteomes" id="UP000000583">
    <property type="component" value="Chromosome"/>
</dbReference>
<dbReference type="Proteomes" id="UP000000801">
    <property type="component" value="Chromosome"/>
</dbReference>
<dbReference type="GO" id="GO:0005829">
    <property type="term" value="C:cytosol"/>
    <property type="evidence" value="ECO:0007669"/>
    <property type="project" value="TreeGrafter"/>
</dbReference>
<dbReference type="GO" id="GO:0015035">
    <property type="term" value="F:protein-disulfide reductase activity"/>
    <property type="evidence" value="ECO:0007669"/>
    <property type="project" value="InterPro"/>
</dbReference>
<dbReference type="GO" id="GO:0045454">
    <property type="term" value="P:cell redox homeostasis"/>
    <property type="evidence" value="ECO:0007669"/>
    <property type="project" value="TreeGrafter"/>
</dbReference>
<dbReference type="CDD" id="cd02947">
    <property type="entry name" value="TRX_family"/>
    <property type="match status" value="1"/>
</dbReference>
<dbReference type="FunFam" id="3.40.30.10:FF:000001">
    <property type="entry name" value="Thioredoxin"/>
    <property type="match status" value="1"/>
</dbReference>
<dbReference type="Gene3D" id="3.40.30.10">
    <property type="entry name" value="Glutaredoxin"/>
    <property type="match status" value="1"/>
</dbReference>
<dbReference type="InterPro" id="IPR005746">
    <property type="entry name" value="Thioredoxin"/>
</dbReference>
<dbReference type="InterPro" id="IPR036249">
    <property type="entry name" value="Thioredoxin-like_sf"/>
</dbReference>
<dbReference type="InterPro" id="IPR017937">
    <property type="entry name" value="Thioredoxin_CS"/>
</dbReference>
<dbReference type="InterPro" id="IPR013766">
    <property type="entry name" value="Thioredoxin_domain"/>
</dbReference>
<dbReference type="NCBIfam" id="TIGR01068">
    <property type="entry name" value="thioredoxin"/>
    <property type="match status" value="1"/>
</dbReference>
<dbReference type="PANTHER" id="PTHR45663">
    <property type="entry name" value="GEO12009P1"/>
    <property type="match status" value="1"/>
</dbReference>
<dbReference type="PANTHER" id="PTHR45663:SF11">
    <property type="entry name" value="GEO12009P1"/>
    <property type="match status" value="1"/>
</dbReference>
<dbReference type="Pfam" id="PF00085">
    <property type="entry name" value="Thioredoxin"/>
    <property type="match status" value="1"/>
</dbReference>
<dbReference type="PIRSF" id="PIRSF000077">
    <property type="entry name" value="Thioredoxin"/>
    <property type="match status" value="1"/>
</dbReference>
<dbReference type="PRINTS" id="PR00421">
    <property type="entry name" value="THIOREDOXIN"/>
</dbReference>
<dbReference type="SUPFAM" id="SSF52833">
    <property type="entry name" value="Thioredoxin-like"/>
    <property type="match status" value="1"/>
</dbReference>
<dbReference type="PROSITE" id="PS00194">
    <property type="entry name" value="THIOREDOXIN_1"/>
    <property type="match status" value="1"/>
</dbReference>
<dbReference type="PROSITE" id="PS51352">
    <property type="entry name" value="THIOREDOXIN_2"/>
    <property type="match status" value="1"/>
</dbReference>
<feature type="chain" id="PRO_0000120084" description="Thioredoxin">
    <location>
        <begin position="1"/>
        <end position="102"/>
    </location>
</feature>
<feature type="domain" description="Thioredoxin" evidence="1">
    <location>
        <begin position="1"/>
        <end position="102"/>
    </location>
</feature>
<feature type="disulfide bond" description="Redox-active" evidence="1">
    <location>
        <begin position="28"/>
        <end position="31"/>
    </location>
</feature>
<evidence type="ECO:0000255" key="1">
    <source>
        <dbReference type="PROSITE-ProRule" id="PRU00691"/>
    </source>
</evidence>
<evidence type="ECO:0000305" key="2"/>